<evidence type="ECO:0000255" key="1">
    <source>
        <dbReference type="HAMAP-Rule" id="MF_00531"/>
    </source>
</evidence>
<evidence type="ECO:0000305" key="2"/>
<organism>
    <name type="scientific">Treponema denticola (strain ATCC 35405 / DSM 14222 / CIP 103919 / JCM 8153 / KCTC 15104)</name>
    <dbReference type="NCBI Taxonomy" id="243275"/>
    <lineage>
        <taxon>Bacteria</taxon>
        <taxon>Pseudomonadati</taxon>
        <taxon>Spirochaetota</taxon>
        <taxon>Spirochaetia</taxon>
        <taxon>Spirochaetales</taxon>
        <taxon>Treponemataceae</taxon>
        <taxon>Treponema</taxon>
    </lineage>
</organism>
<name>RS19_TREDE</name>
<reference key="1">
    <citation type="journal article" date="2004" name="Proc. Natl. Acad. Sci. U.S.A.">
        <title>Comparison of the genome of the oral pathogen Treponema denticola with other spirochete genomes.</title>
        <authorList>
            <person name="Seshadri R."/>
            <person name="Myers G.S.A."/>
            <person name="Tettelin H."/>
            <person name="Eisen J.A."/>
            <person name="Heidelberg J.F."/>
            <person name="Dodson R.J."/>
            <person name="Davidsen T.M."/>
            <person name="DeBoy R.T."/>
            <person name="Fouts D.E."/>
            <person name="Haft D.H."/>
            <person name="Selengut J."/>
            <person name="Ren Q."/>
            <person name="Brinkac L.M."/>
            <person name="Madupu R."/>
            <person name="Kolonay J.F."/>
            <person name="Durkin S.A."/>
            <person name="Daugherty S.C."/>
            <person name="Shetty J."/>
            <person name="Shvartsbeyn A."/>
            <person name="Gebregeorgis E."/>
            <person name="Geer K."/>
            <person name="Tsegaye G."/>
            <person name="Malek J.A."/>
            <person name="Ayodeji B."/>
            <person name="Shatsman S."/>
            <person name="McLeod M.P."/>
            <person name="Smajs D."/>
            <person name="Howell J.K."/>
            <person name="Pal S."/>
            <person name="Amin A."/>
            <person name="Vashisth P."/>
            <person name="McNeill T.Z."/>
            <person name="Xiang Q."/>
            <person name="Sodergren E."/>
            <person name="Baca E."/>
            <person name="Weinstock G.M."/>
            <person name="Norris S.J."/>
            <person name="Fraser C.M."/>
            <person name="Paulsen I.T."/>
        </authorList>
    </citation>
    <scope>NUCLEOTIDE SEQUENCE [LARGE SCALE GENOMIC DNA]</scope>
    <source>
        <strain>ATCC 35405 / DSM 14222 / CIP 103919 / JCM 8153 / KCTC 15104</strain>
    </source>
</reference>
<dbReference type="EMBL" id="AE017226">
    <property type="protein sequence ID" value="AAS11262.1"/>
    <property type="molecule type" value="Genomic_DNA"/>
</dbReference>
<dbReference type="RefSeq" id="NP_971381.1">
    <property type="nucleotide sequence ID" value="NC_002967.9"/>
</dbReference>
<dbReference type="RefSeq" id="WP_002669999.1">
    <property type="nucleotide sequence ID" value="NC_002967.9"/>
</dbReference>
<dbReference type="SMR" id="Q73PM8"/>
<dbReference type="STRING" id="243275.TDE_0771"/>
<dbReference type="PaxDb" id="243275-TDE_0771"/>
<dbReference type="GeneID" id="2740311"/>
<dbReference type="KEGG" id="tde:TDE_0771"/>
<dbReference type="PATRIC" id="fig|243275.7.peg.744"/>
<dbReference type="eggNOG" id="COG0185">
    <property type="taxonomic scope" value="Bacteria"/>
</dbReference>
<dbReference type="HOGENOM" id="CLU_144911_0_1_12"/>
<dbReference type="OrthoDB" id="9797833at2"/>
<dbReference type="Proteomes" id="UP000008212">
    <property type="component" value="Chromosome"/>
</dbReference>
<dbReference type="GO" id="GO:0005737">
    <property type="term" value="C:cytoplasm"/>
    <property type="evidence" value="ECO:0007669"/>
    <property type="project" value="UniProtKB-ARBA"/>
</dbReference>
<dbReference type="GO" id="GO:0015935">
    <property type="term" value="C:small ribosomal subunit"/>
    <property type="evidence" value="ECO:0007669"/>
    <property type="project" value="InterPro"/>
</dbReference>
<dbReference type="GO" id="GO:0019843">
    <property type="term" value="F:rRNA binding"/>
    <property type="evidence" value="ECO:0007669"/>
    <property type="project" value="UniProtKB-UniRule"/>
</dbReference>
<dbReference type="GO" id="GO:0003735">
    <property type="term" value="F:structural constituent of ribosome"/>
    <property type="evidence" value="ECO:0007669"/>
    <property type="project" value="InterPro"/>
</dbReference>
<dbReference type="GO" id="GO:0000028">
    <property type="term" value="P:ribosomal small subunit assembly"/>
    <property type="evidence" value="ECO:0007669"/>
    <property type="project" value="TreeGrafter"/>
</dbReference>
<dbReference type="GO" id="GO:0006412">
    <property type="term" value="P:translation"/>
    <property type="evidence" value="ECO:0007669"/>
    <property type="project" value="UniProtKB-UniRule"/>
</dbReference>
<dbReference type="FunFam" id="3.30.860.10:FF:000001">
    <property type="entry name" value="30S ribosomal protein S19"/>
    <property type="match status" value="1"/>
</dbReference>
<dbReference type="Gene3D" id="3.30.860.10">
    <property type="entry name" value="30s Ribosomal Protein S19, Chain A"/>
    <property type="match status" value="1"/>
</dbReference>
<dbReference type="HAMAP" id="MF_00531">
    <property type="entry name" value="Ribosomal_uS19"/>
    <property type="match status" value="1"/>
</dbReference>
<dbReference type="InterPro" id="IPR002222">
    <property type="entry name" value="Ribosomal_uS19"/>
</dbReference>
<dbReference type="InterPro" id="IPR005732">
    <property type="entry name" value="Ribosomal_uS19_bac-type"/>
</dbReference>
<dbReference type="InterPro" id="IPR020934">
    <property type="entry name" value="Ribosomal_uS19_CS"/>
</dbReference>
<dbReference type="InterPro" id="IPR023575">
    <property type="entry name" value="Ribosomal_uS19_SF"/>
</dbReference>
<dbReference type="NCBIfam" id="TIGR01050">
    <property type="entry name" value="rpsS_bact"/>
    <property type="match status" value="1"/>
</dbReference>
<dbReference type="PANTHER" id="PTHR11880">
    <property type="entry name" value="RIBOSOMAL PROTEIN S19P FAMILY MEMBER"/>
    <property type="match status" value="1"/>
</dbReference>
<dbReference type="PANTHER" id="PTHR11880:SF8">
    <property type="entry name" value="SMALL RIBOSOMAL SUBUNIT PROTEIN US19M"/>
    <property type="match status" value="1"/>
</dbReference>
<dbReference type="Pfam" id="PF00203">
    <property type="entry name" value="Ribosomal_S19"/>
    <property type="match status" value="1"/>
</dbReference>
<dbReference type="PIRSF" id="PIRSF002144">
    <property type="entry name" value="Ribosomal_S19"/>
    <property type="match status" value="1"/>
</dbReference>
<dbReference type="PRINTS" id="PR00975">
    <property type="entry name" value="RIBOSOMALS19"/>
</dbReference>
<dbReference type="SUPFAM" id="SSF54570">
    <property type="entry name" value="Ribosomal protein S19"/>
    <property type="match status" value="1"/>
</dbReference>
<dbReference type="PROSITE" id="PS00323">
    <property type="entry name" value="RIBOSOMAL_S19"/>
    <property type="match status" value="1"/>
</dbReference>
<proteinExistence type="inferred from homology"/>
<comment type="function">
    <text evidence="1">Protein S19 forms a complex with S13 that binds strongly to the 16S ribosomal RNA.</text>
</comment>
<comment type="similarity">
    <text evidence="1">Belongs to the universal ribosomal protein uS19 family.</text>
</comment>
<accession>Q73PM8</accession>
<sequence>MSRSVKKGPFIAKSLFKNVNEMNRSGKKKPIKTYSRCSTIIPEMVGNTISVHNGKTWIPVYITENLVGHKLGEFAPTRTFRKHANSDKKVGK</sequence>
<gene>
    <name evidence="1" type="primary">rpsS</name>
    <name type="ordered locus">TDE_0771</name>
</gene>
<keyword id="KW-1185">Reference proteome</keyword>
<keyword id="KW-0687">Ribonucleoprotein</keyword>
<keyword id="KW-0689">Ribosomal protein</keyword>
<keyword id="KW-0694">RNA-binding</keyword>
<keyword id="KW-0699">rRNA-binding</keyword>
<protein>
    <recommendedName>
        <fullName evidence="1">Small ribosomal subunit protein uS19</fullName>
    </recommendedName>
    <alternativeName>
        <fullName evidence="2">30S ribosomal protein S19</fullName>
    </alternativeName>
</protein>
<feature type="chain" id="PRO_0000129931" description="Small ribosomal subunit protein uS19">
    <location>
        <begin position="1"/>
        <end position="92"/>
    </location>
</feature>